<proteinExistence type="inferred from homology"/>
<reference key="1">
    <citation type="journal article" date="2007" name="BMC Microbiol.">
        <title>Subtle genetic changes enhance virulence of methicillin resistant and sensitive Staphylococcus aureus.</title>
        <authorList>
            <person name="Highlander S.K."/>
            <person name="Hulten K.G."/>
            <person name="Qin X."/>
            <person name="Jiang H."/>
            <person name="Yerrapragada S."/>
            <person name="Mason E.O. Jr."/>
            <person name="Shang Y."/>
            <person name="Williams T.M."/>
            <person name="Fortunov R.M."/>
            <person name="Liu Y."/>
            <person name="Igboeli O."/>
            <person name="Petrosino J."/>
            <person name="Tirumalai M."/>
            <person name="Uzman A."/>
            <person name="Fox G.E."/>
            <person name="Cardenas A.M."/>
            <person name="Muzny D.M."/>
            <person name="Hemphill L."/>
            <person name="Ding Y."/>
            <person name="Dugan S."/>
            <person name="Blyth P.R."/>
            <person name="Buhay C.J."/>
            <person name="Dinh H.H."/>
            <person name="Hawes A.C."/>
            <person name="Holder M."/>
            <person name="Kovar C.L."/>
            <person name="Lee S.L."/>
            <person name="Liu W."/>
            <person name="Nazareth L.V."/>
            <person name="Wang Q."/>
            <person name="Zhou J."/>
            <person name="Kaplan S.L."/>
            <person name="Weinstock G.M."/>
        </authorList>
    </citation>
    <scope>NUCLEOTIDE SEQUENCE [LARGE SCALE GENOMIC DNA]</scope>
    <source>
        <strain>USA300 / TCH1516</strain>
    </source>
</reference>
<feature type="chain" id="PRO_0000341861" description="2-succinyl-5-enolpyruvyl-6-hydroxy-3-cyclohexene-1-carboxylate synthase">
    <location>
        <begin position="1"/>
        <end position="557"/>
    </location>
</feature>
<accession>A8Z0D7</accession>
<gene>
    <name evidence="1" type="primary">menD</name>
    <name type="ordered locus">USA300HOU_0991</name>
</gene>
<organism>
    <name type="scientific">Staphylococcus aureus (strain USA300 / TCH1516)</name>
    <dbReference type="NCBI Taxonomy" id="451516"/>
    <lineage>
        <taxon>Bacteria</taxon>
        <taxon>Bacillati</taxon>
        <taxon>Bacillota</taxon>
        <taxon>Bacilli</taxon>
        <taxon>Bacillales</taxon>
        <taxon>Staphylococcaceae</taxon>
        <taxon>Staphylococcus</taxon>
    </lineage>
</organism>
<evidence type="ECO:0000255" key="1">
    <source>
        <dbReference type="HAMAP-Rule" id="MF_01659"/>
    </source>
</evidence>
<comment type="function">
    <text evidence="1">Catalyzes the thiamine diphosphate-dependent decarboxylation of 2-oxoglutarate and the subsequent addition of the resulting succinic semialdehyde-thiamine pyrophosphate anion to isochorismate to yield 2-succinyl-5-enolpyruvyl-6-hydroxy-3-cyclohexene-1-carboxylate (SEPHCHC).</text>
</comment>
<comment type="catalytic activity">
    <reaction evidence="1">
        <text>isochorismate + 2-oxoglutarate + H(+) = 5-enolpyruvoyl-6-hydroxy-2-succinyl-cyclohex-3-ene-1-carboxylate + CO2</text>
        <dbReference type="Rhea" id="RHEA:25593"/>
        <dbReference type="ChEBI" id="CHEBI:15378"/>
        <dbReference type="ChEBI" id="CHEBI:16526"/>
        <dbReference type="ChEBI" id="CHEBI:16810"/>
        <dbReference type="ChEBI" id="CHEBI:29780"/>
        <dbReference type="ChEBI" id="CHEBI:58818"/>
        <dbReference type="EC" id="2.2.1.9"/>
    </reaction>
</comment>
<comment type="cofactor">
    <cofactor evidence="1">
        <name>Mg(2+)</name>
        <dbReference type="ChEBI" id="CHEBI:18420"/>
    </cofactor>
    <cofactor evidence="1">
        <name>Mn(2+)</name>
        <dbReference type="ChEBI" id="CHEBI:29035"/>
    </cofactor>
</comment>
<comment type="cofactor">
    <cofactor evidence="1">
        <name>thiamine diphosphate</name>
        <dbReference type="ChEBI" id="CHEBI:58937"/>
    </cofactor>
    <text evidence="1">Binds 1 thiamine pyrophosphate per subunit.</text>
</comment>
<comment type="pathway">
    <text evidence="1">Quinol/quinone metabolism; 1,4-dihydroxy-2-naphthoate biosynthesis; 1,4-dihydroxy-2-naphthoate from chorismate: step 2/7.</text>
</comment>
<comment type="pathway">
    <text evidence="1">Quinol/quinone metabolism; menaquinone biosynthesis.</text>
</comment>
<comment type="subunit">
    <text evidence="1">Homodimer.</text>
</comment>
<comment type="similarity">
    <text evidence="1">Belongs to the TPP enzyme family. MenD subfamily.</text>
</comment>
<dbReference type="EC" id="2.2.1.9" evidence="1"/>
<dbReference type="EMBL" id="CP000730">
    <property type="protein sequence ID" value="ABX29011.1"/>
    <property type="molecule type" value="Genomic_DNA"/>
</dbReference>
<dbReference type="RefSeq" id="WP_000526687.1">
    <property type="nucleotide sequence ID" value="NC_010079.1"/>
</dbReference>
<dbReference type="SMR" id="A8Z0D7"/>
<dbReference type="KEGG" id="sax:USA300HOU_0991"/>
<dbReference type="HOGENOM" id="CLU_006051_3_0_9"/>
<dbReference type="UniPathway" id="UPA00079"/>
<dbReference type="UniPathway" id="UPA01057">
    <property type="reaction ID" value="UER00164"/>
</dbReference>
<dbReference type="GO" id="GO:0070204">
    <property type="term" value="F:2-succinyl-5-enolpyruvyl-6-hydroxy-3-cyclohexene-1-carboxylic-acid synthase activity"/>
    <property type="evidence" value="ECO:0007669"/>
    <property type="project" value="UniProtKB-UniRule"/>
</dbReference>
<dbReference type="GO" id="GO:0000287">
    <property type="term" value="F:magnesium ion binding"/>
    <property type="evidence" value="ECO:0007669"/>
    <property type="project" value="UniProtKB-UniRule"/>
</dbReference>
<dbReference type="GO" id="GO:0030145">
    <property type="term" value="F:manganese ion binding"/>
    <property type="evidence" value="ECO:0007669"/>
    <property type="project" value="UniProtKB-UniRule"/>
</dbReference>
<dbReference type="GO" id="GO:0030976">
    <property type="term" value="F:thiamine pyrophosphate binding"/>
    <property type="evidence" value="ECO:0007669"/>
    <property type="project" value="UniProtKB-UniRule"/>
</dbReference>
<dbReference type="GO" id="GO:0009234">
    <property type="term" value="P:menaquinone biosynthetic process"/>
    <property type="evidence" value="ECO:0007669"/>
    <property type="project" value="UniProtKB-UniRule"/>
</dbReference>
<dbReference type="CDD" id="cd07037">
    <property type="entry name" value="TPP_PYR_MenD"/>
    <property type="match status" value="1"/>
</dbReference>
<dbReference type="CDD" id="cd02009">
    <property type="entry name" value="TPP_SHCHC_synthase"/>
    <property type="match status" value="1"/>
</dbReference>
<dbReference type="Gene3D" id="3.40.50.970">
    <property type="match status" value="2"/>
</dbReference>
<dbReference type="Gene3D" id="3.40.50.1220">
    <property type="entry name" value="TPP-binding domain"/>
    <property type="match status" value="1"/>
</dbReference>
<dbReference type="HAMAP" id="MF_01659">
    <property type="entry name" value="MenD"/>
    <property type="match status" value="1"/>
</dbReference>
<dbReference type="InterPro" id="IPR004433">
    <property type="entry name" value="MenaQ_synth_MenD"/>
</dbReference>
<dbReference type="InterPro" id="IPR032264">
    <property type="entry name" value="MenD_middle"/>
</dbReference>
<dbReference type="InterPro" id="IPR029061">
    <property type="entry name" value="THDP-binding"/>
</dbReference>
<dbReference type="InterPro" id="IPR012001">
    <property type="entry name" value="Thiamin_PyroP_enz_TPP-bd_dom"/>
</dbReference>
<dbReference type="InterPro" id="IPR011766">
    <property type="entry name" value="TPP_enzyme_TPP-bd"/>
</dbReference>
<dbReference type="NCBIfam" id="TIGR00173">
    <property type="entry name" value="menD"/>
    <property type="match status" value="1"/>
</dbReference>
<dbReference type="PANTHER" id="PTHR42916">
    <property type="entry name" value="2-SUCCINYL-5-ENOLPYRUVYL-6-HYDROXY-3-CYCLOHEXENE-1-CARBOXYLATE SYNTHASE"/>
    <property type="match status" value="1"/>
</dbReference>
<dbReference type="PANTHER" id="PTHR42916:SF1">
    <property type="entry name" value="PROTEIN PHYLLO, CHLOROPLASTIC"/>
    <property type="match status" value="1"/>
</dbReference>
<dbReference type="Pfam" id="PF02775">
    <property type="entry name" value="TPP_enzyme_C"/>
    <property type="match status" value="1"/>
</dbReference>
<dbReference type="Pfam" id="PF16582">
    <property type="entry name" value="TPP_enzyme_M_2"/>
    <property type="match status" value="1"/>
</dbReference>
<dbReference type="Pfam" id="PF02776">
    <property type="entry name" value="TPP_enzyme_N"/>
    <property type="match status" value="1"/>
</dbReference>
<dbReference type="PIRSF" id="PIRSF004983">
    <property type="entry name" value="MenD"/>
    <property type="match status" value="1"/>
</dbReference>
<dbReference type="SUPFAM" id="SSF52518">
    <property type="entry name" value="Thiamin diphosphate-binding fold (THDP-binding)"/>
    <property type="match status" value="2"/>
</dbReference>
<sequence>MGNHKAALTKQVFTFASELYAYGVREVVISPGSRSTPLALAFEAHPNIKTWIHPDERSAAFFAVGLIKGSERPVAILCTSGTAAANYTPAIAESQISRIPLIVLTSDRPHELRSVGAPQAINQVNMFNNYVSYEFDMPIADDSKETIDAIYYQMQIASQYLYGPHKGPIHFNLPFRDPLTPDLNATELLTSEMKILPHYQKSIDASALRHILNKKKGLIIVGDMQHQEVDQILTYSTIYDLPILADPLSHLRKFDHPNVICTYDLLFRSGLDLNVDFVIRVGKPVISKKLNQWLKKTDAFQILVQNNDKIDVFPIAPDISYEISANDFFRSLMEDTTVNRVSWLEKWQCLEKKGRKEIKCYLEQATDESAFVGELIKKTSEKDALFISNSMPIRDVDNLLLNKNIDVYANRGANGIDGIVSTALGMAVHKRITLLIGDLSFYHDMNGLLMSKLNNIQMNIVLLNNDGGGIFSYLPQKESATDYFERLFGTPTGLDFEYTAKLYQFDFKRFNSVSEFKNATLLSETSTIYELITNREDNFKQHQILYQKLSEMIHDTL</sequence>
<keyword id="KW-0460">Magnesium</keyword>
<keyword id="KW-0464">Manganese</keyword>
<keyword id="KW-0474">Menaquinone biosynthesis</keyword>
<keyword id="KW-0479">Metal-binding</keyword>
<keyword id="KW-0786">Thiamine pyrophosphate</keyword>
<keyword id="KW-0808">Transferase</keyword>
<name>MEND_STAAT</name>
<protein>
    <recommendedName>
        <fullName evidence="1">2-succinyl-5-enolpyruvyl-6-hydroxy-3-cyclohexene-1-carboxylate synthase</fullName>
        <shortName evidence="1">SEPHCHC synthase</shortName>
        <ecNumber evidence="1">2.2.1.9</ecNumber>
    </recommendedName>
    <alternativeName>
        <fullName evidence="1">Menaquinone biosynthesis protein MenD</fullName>
    </alternativeName>
</protein>